<name>SARM1_PIG</name>
<organism>
    <name type="scientific">Sus scrofa</name>
    <name type="common">Pig</name>
    <dbReference type="NCBI Taxonomy" id="9823"/>
    <lineage>
        <taxon>Eukaryota</taxon>
        <taxon>Metazoa</taxon>
        <taxon>Chordata</taxon>
        <taxon>Craniata</taxon>
        <taxon>Vertebrata</taxon>
        <taxon>Euteleostomi</taxon>
        <taxon>Mammalia</taxon>
        <taxon>Eutheria</taxon>
        <taxon>Laurasiatheria</taxon>
        <taxon>Artiodactyla</taxon>
        <taxon>Suina</taxon>
        <taxon>Suidae</taxon>
        <taxon>Sus</taxon>
    </lineage>
</organism>
<dbReference type="EC" id="3.2.2.6" evidence="2"/>
<dbReference type="EC" id="3.2.2.-" evidence="2"/>
<dbReference type="EMBL" id="FP325197">
    <property type="status" value="NOT_ANNOTATED_CDS"/>
    <property type="molecule type" value="Genomic_DNA"/>
</dbReference>
<dbReference type="SMR" id="I3L5V6"/>
<dbReference type="FunCoup" id="I3L5V6">
    <property type="interactions" value="637"/>
</dbReference>
<dbReference type="STRING" id="9823.ENSSSCP00000025709"/>
<dbReference type="PaxDb" id="9823-ENSSSCP00000019407"/>
<dbReference type="PeptideAtlas" id="I3L5V6"/>
<dbReference type="eggNOG" id="KOG3678">
    <property type="taxonomic scope" value="Eukaryota"/>
</dbReference>
<dbReference type="HOGENOM" id="CLU_003286_2_0_1"/>
<dbReference type="InParanoid" id="I3L5V6"/>
<dbReference type="TreeFam" id="TF315263"/>
<dbReference type="Proteomes" id="UP000008227">
    <property type="component" value="Unplaced"/>
</dbReference>
<dbReference type="Proteomes" id="UP000314985">
    <property type="component" value="Unplaced"/>
</dbReference>
<dbReference type="Proteomes" id="UP000694570">
    <property type="component" value="Unplaced"/>
</dbReference>
<dbReference type="Proteomes" id="UP000694571">
    <property type="component" value="Unplaced"/>
</dbReference>
<dbReference type="Proteomes" id="UP000694720">
    <property type="component" value="Unplaced"/>
</dbReference>
<dbReference type="Proteomes" id="UP000694722">
    <property type="component" value="Unplaced"/>
</dbReference>
<dbReference type="Proteomes" id="UP000694723">
    <property type="component" value="Unplaced"/>
</dbReference>
<dbReference type="Proteomes" id="UP000694724">
    <property type="component" value="Unplaced"/>
</dbReference>
<dbReference type="Proteomes" id="UP000694725">
    <property type="component" value="Unplaced"/>
</dbReference>
<dbReference type="Proteomes" id="UP000694726">
    <property type="component" value="Unplaced"/>
</dbReference>
<dbReference type="Proteomes" id="UP000694727">
    <property type="component" value="Unplaced"/>
</dbReference>
<dbReference type="Proteomes" id="UP000694728">
    <property type="component" value="Unplaced"/>
</dbReference>
<dbReference type="GO" id="GO:0030424">
    <property type="term" value="C:axon"/>
    <property type="evidence" value="ECO:0007669"/>
    <property type="project" value="UniProtKB-SubCell"/>
</dbReference>
<dbReference type="GO" id="GO:0005737">
    <property type="term" value="C:cytoplasm"/>
    <property type="evidence" value="ECO:0000250"/>
    <property type="project" value="UniProtKB"/>
</dbReference>
<dbReference type="GO" id="GO:0030425">
    <property type="term" value="C:dendrite"/>
    <property type="evidence" value="ECO:0000250"/>
    <property type="project" value="UniProtKB"/>
</dbReference>
<dbReference type="GO" id="GO:0005874">
    <property type="term" value="C:microtubule"/>
    <property type="evidence" value="ECO:0000250"/>
    <property type="project" value="UniProtKB"/>
</dbReference>
<dbReference type="GO" id="GO:0005739">
    <property type="term" value="C:mitochondrion"/>
    <property type="evidence" value="ECO:0000250"/>
    <property type="project" value="UniProtKB"/>
</dbReference>
<dbReference type="GO" id="GO:0045202">
    <property type="term" value="C:synapse"/>
    <property type="evidence" value="ECO:0000250"/>
    <property type="project" value="UniProtKB"/>
</dbReference>
<dbReference type="GO" id="GO:0003953">
    <property type="term" value="F:NAD+ nucleosidase activity"/>
    <property type="evidence" value="ECO:0000250"/>
    <property type="project" value="UniProtKB"/>
</dbReference>
<dbReference type="GO" id="GO:0061809">
    <property type="term" value="F:NAD+ nucleosidase activity, cyclic ADP-ribose generating"/>
    <property type="evidence" value="ECO:0000250"/>
    <property type="project" value="UniProtKB"/>
</dbReference>
<dbReference type="GO" id="GO:0050135">
    <property type="term" value="F:NADP+ nucleosidase activity"/>
    <property type="evidence" value="ECO:0007669"/>
    <property type="project" value="RHEA"/>
</dbReference>
<dbReference type="GO" id="GO:0035591">
    <property type="term" value="F:signaling adaptor activity"/>
    <property type="evidence" value="ECO:0007669"/>
    <property type="project" value="InterPro"/>
</dbReference>
<dbReference type="GO" id="GO:0030154">
    <property type="term" value="P:cell differentiation"/>
    <property type="evidence" value="ECO:0007669"/>
    <property type="project" value="UniProtKB-KW"/>
</dbReference>
<dbReference type="GO" id="GO:0045087">
    <property type="term" value="P:innate immune response"/>
    <property type="evidence" value="ECO:0007669"/>
    <property type="project" value="UniProtKB-KW"/>
</dbReference>
<dbReference type="GO" id="GO:0019677">
    <property type="term" value="P:NAD catabolic process"/>
    <property type="evidence" value="ECO:0000250"/>
    <property type="project" value="UniProtKB"/>
</dbReference>
<dbReference type="GO" id="GO:0034128">
    <property type="term" value="P:negative regulation of MyD88-independent toll-like receptor signaling pathway"/>
    <property type="evidence" value="ECO:0007669"/>
    <property type="project" value="InterPro"/>
</dbReference>
<dbReference type="GO" id="GO:0007399">
    <property type="term" value="P:nervous system development"/>
    <property type="evidence" value="ECO:0007669"/>
    <property type="project" value="UniProtKB-KW"/>
</dbReference>
<dbReference type="GO" id="GO:0070585">
    <property type="term" value="P:protein localization to mitochondrion"/>
    <property type="evidence" value="ECO:0000250"/>
    <property type="project" value="UniProtKB"/>
</dbReference>
<dbReference type="GO" id="GO:0048814">
    <property type="term" value="P:regulation of dendrite morphogenesis"/>
    <property type="evidence" value="ECO:0000250"/>
    <property type="project" value="UniProtKB"/>
</dbReference>
<dbReference type="GO" id="GO:0048678">
    <property type="term" value="P:response to axon injury"/>
    <property type="evidence" value="ECO:0000250"/>
    <property type="project" value="UniProtKB"/>
</dbReference>
<dbReference type="GO" id="GO:0007165">
    <property type="term" value="P:signal transduction"/>
    <property type="evidence" value="ECO:0007669"/>
    <property type="project" value="InterPro"/>
</dbReference>
<dbReference type="CDD" id="cd09502">
    <property type="entry name" value="SAM_SARM1-like_repeat2"/>
    <property type="match status" value="1"/>
</dbReference>
<dbReference type="CDD" id="cd24153">
    <property type="entry name" value="SARM1_N"/>
    <property type="match status" value="1"/>
</dbReference>
<dbReference type="FunFam" id="1.10.150.50:FF:000062">
    <property type="entry name" value="Sterile alpha and TIR motif containing 1"/>
    <property type="match status" value="1"/>
</dbReference>
<dbReference type="FunFam" id="3.40.50.10140:FF:000013">
    <property type="entry name" value="Sterile alpha and TIR motif containing 1"/>
    <property type="match status" value="1"/>
</dbReference>
<dbReference type="FunFam" id="1.10.150.50:FF:000043">
    <property type="entry name" value="Sterile alpha and TIR motif-containing 1"/>
    <property type="match status" value="1"/>
</dbReference>
<dbReference type="FunFam" id="1.25.10.10:FF:000397">
    <property type="entry name" value="sterile alpha and TIR motif-containing protein 1"/>
    <property type="match status" value="1"/>
</dbReference>
<dbReference type="Gene3D" id="1.25.10.10">
    <property type="entry name" value="Leucine-rich Repeat Variant"/>
    <property type="match status" value="1"/>
</dbReference>
<dbReference type="Gene3D" id="3.40.50.10140">
    <property type="entry name" value="Toll/interleukin-1 receptor homology (TIR) domain"/>
    <property type="match status" value="1"/>
</dbReference>
<dbReference type="Gene3D" id="1.10.150.50">
    <property type="entry name" value="Transcription Factor, Ets-1"/>
    <property type="match status" value="2"/>
</dbReference>
<dbReference type="InterPro" id="IPR011989">
    <property type="entry name" value="ARM-like"/>
</dbReference>
<dbReference type="InterPro" id="IPR016024">
    <property type="entry name" value="ARM-type_fold"/>
</dbReference>
<dbReference type="InterPro" id="IPR001660">
    <property type="entry name" value="SAM"/>
</dbReference>
<dbReference type="InterPro" id="IPR013761">
    <property type="entry name" value="SAM/pointed_sf"/>
</dbReference>
<dbReference type="InterPro" id="IPR039184">
    <property type="entry name" value="SARM1"/>
</dbReference>
<dbReference type="InterPro" id="IPR000157">
    <property type="entry name" value="TIR_dom"/>
</dbReference>
<dbReference type="InterPro" id="IPR035897">
    <property type="entry name" value="Toll_tir_struct_dom_sf"/>
</dbReference>
<dbReference type="PANTHER" id="PTHR22998:SF1">
    <property type="entry name" value="NAD(+) HYDROLASE SARM1"/>
    <property type="match status" value="1"/>
</dbReference>
<dbReference type="PANTHER" id="PTHR22998">
    <property type="entry name" value="SARM1"/>
    <property type="match status" value="1"/>
</dbReference>
<dbReference type="Pfam" id="PF07647">
    <property type="entry name" value="SAM_2"/>
    <property type="match status" value="2"/>
</dbReference>
<dbReference type="Pfam" id="PF13676">
    <property type="entry name" value="TIR_2"/>
    <property type="match status" value="1"/>
</dbReference>
<dbReference type="SMART" id="SM00454">
    <property type="entry name" value="SAM"/>
    <property type="match status" value="2"/>
</dbReference>
<dbReference type="SMART" id="SM00255">
    <property type="entry name" value="TIR"/>
    <property type="match status" value="1"/>
</dbReference>
<dbReference type="SUPFAM" id="SSF48371">
    <property type="entry name" value="ARM repeat"/>
    <property type="match status" value="1"/>
</dbReference>
<dbReference type="SUPFAM" id="SSF47769">
    <property type="entry name" value="SAM/Pointed domain"/>
    <property type="match status" value="2"/>
</dbReference>
<dbReference type="SUPFAM" id="SSF52200">
    <property type="entry name" value="Toll/Interleukin receptor TIR domain"/>
    <property type="match status" value="1"/>
</dbReference>
<dbReference type="PROSITE" id="PS50105">
    <property type="entry name" value="SAM_DOMAIN"/>
    <property type="match status" value="2"/>
</dbReference>
<dbReference type="PROSITE" id="PS50104">
    <property type="entry name" value="TIR"/>
    <property type="match status" value="1"/>
</dbReference>
<reference key="1">
    <citation type="journal article" date="2013" name="Dev. Comp. Immunol.">
        <title>Molecular characterization of porcine SARM1 and its role in regulating TLRs signaling during highly pathogenic porcine reproductive and respiratory syndrome virus infection in vivo.</title>
        <authorList>
            <person name="Zhou X."/>
            <person name="Jiang T."/>
            <person name="Du X."/>
            <person name="Zhou P."/>
            <person name="Jiang Z."/>
            <person name="Michal J.J."/>
            <person name="Liu B."/>
        </authorList>
    </citation>
    <scope>NUCLEOTIDE SEQUENCE [MRNA]</scope>
    <scope>FUNCTION</scope>
    <scope>SUBCELLULAR LOCATION</scope>
    <scope>TISSUE SPECIFICITY</scope>
</reference>
<reference key="2">
    <citation type="submission" date="2009-11" db="EMBL/GenBank/DDBJ databases">
        <authorList>
            <consortium name="Porcine genome sequencing project"/>
        </authorList>
    </citation>
    <scope>NUCLEOTIDE SEQUENCE [LARGE SCALE GENOMIC DNA]</scope>
</reference>
<keyword id="KW-0966">Cell projection</keyword>
<keyword id="KW-0963">Cytoplasm</keyword>
<keyword id="KW-0221">Differentiation</keyword>
<keyword id="KW-0378">Hydrolase</keyword>
<keyword id="KW-0391">Immunity</keyword>
<keyword id="KW-0399">Innate immunity</keyword>
<keyword id="KW-0496">Mitochondrion</keyword>
<keyword id="KW-0520">NAD</keyword>
<keyword id="KW-0524">Neurogenesis</keyword>
<keyword id="KW-0597">Phosphoprotein</keyword>
<keyword id="KW-1185">Reference proteome</keyword>
<keyword id="KW-0677">Repeat</keyword>
<keyword id="KW-0770">Synapse</keyword>
<keyword id="KW-0809">Transit peptide</keyword>
<feature type="transit peptide" description="Mitochondrion" evidence="2">
    <location>
        <begin position="1"/>
        <end position="27"/>
    </location>
</feature>
<feature type="chain" id="PRO_0000420904" description="NAD(+) hydrolase SARM1">
    <location>
        <begin position="28"/>
        <end position="725"/>
    </location>
</feature>
<feature type="repeat" description="ARM 1" evidence="3">
    <location>
        <begin position="60"/>
        <end position="100"/>
    </location>
</feature>
<feature type="repeat" description="ARM 2" evidence="3">
    <location>
        <begin position="114"/>
        <end position="153"/>
    </location>
</feature>
<feature type="repeat" description="ARM 3" evidence="3">
    <location>
        <begin position="155"/>
        <end position="194"/>
    </location>
</feature>
<feature type="repeat" description="ARM 4" evidence="3">
    <location>
        <begin position="197"/>
        <end position="236"/>
    </location>
</feature>
<feature type="repeat" description="ARM 5" evidence="3">
    <location>
        <begin position="238"/>
        <end position="281"/>
    </location>
</feature>
<feature type="repeat" description="ARM 6" evidence="3">
    <location>
        <begin position="282"/>
        <end position="315"/>
    </location>
</feature>
<feature type="repeat" description="ARM 7" evidence="3">
    <location>
        <begin position="316"/>
        <end position="355"/>
    </location>
</feature>
<feature type="repeat" description="ARM 8" evidence="3">
    <location>
        <begin position="360"/>
        <end position="403"/>
    </location>
</feature>
<feature type="domain" description="SAM 1" evidence="4">
    <location>
        <begin position="413"/>
        <end position="477"/>
    </location>
</feature>
<feature type="domain" description="SAM 2" evidence="4">
    <location>
        <begin position="483"/>
        <end position="549"/>
    </location>
</feature>
<feature type="domain" description="TIR" evidence="5">
    <location>
        <begin position="561"/>
        <end position="704"/>
    </location>
</feature>
<feature type="region of interest" description="Disordered" evidence="6">
    <location>
        <begin position="705"/>
        <end position="725"/>
    </location>
</feature>
<feature type="active site" evidence="5">
    <location>
        <position position="643"/>
    </location>
</feature>
<feature type="binding site" evidence="2">
    <location>
        <position position="103"/>
    </location>
    <ligand>
        <name>NAD(+)</name>
        <dbReference type="ChEBI" id="CHEBI:57540"/>
        <label>1</label>
        <note>inhibitor</note>
    </ligand>
</feature>
<feature type="binding site" evidence="2">
    <location>
        <position position="110"/>
    </location>
    <ligand>
        <name>NAD(+)</name>
        <dbReference type="ChEBI" id="CHEBI:57540"/>
        <label>1</label>
        <note>inhibitor</note>
    </ligand>
</feature>
<feature type="binding site" evidence="2">
    <location>
        <begin position="149"/>
        <end position="158"/>
    </location>
    <ligand>
        <name>NAD(+)</name>
        <dbReference type="ChEBI" id="CHEBI:57540"/>
        <label>1</label>
        <note>inhibitor</note>
    </ligand>
</feature>
<feature type="binding site" evidence="2">
    <location>
        <begin position="191"/>
        <end position="194"/>
    </location>
    <ligand>
        <name>NAD(+)</name>
        <dbReference type="ChEBI" id="CHEBI:57540"/>
        <label>1</label>
        <note>inhibitor</note>
    </ligand>
</feature>
<feature type="binding site" evidence="2">
    <location>
        <begin position="570"/>
        <end position="571"/>
    </location>
    <ligand>
        <name>NAD(+)</name>
        <dbReference type="ChEBI" id="CHEBI:57540"/>
        <label>2</label>
        <note>substrate</note>
    </ligand>
</feature>
<feature type="binding site" evidence="2">
    <location>
        <position position="600"/>
    </location>
    <ligand>
        <name>NAD(+)</name>
        <dbReference type="ChEBI" id="CHEBI:57540"/>
        <label>2</label>
        <note>substrate</note>
    </ligand>
</feature>
<feature type="modified residue" description="Phosphoserine" evidence="2">
    <location>
        <position position="549"/>
    </location>
</feature>
<feature type="modified residue" description="Phosphoserine" evidence="1">
    <location>
        <position position="559"/>
    </location>
</feature>
<comment type="function">
    <text evidence="1 2 7">NAD(+) hydrolase, which plays a key role in axonal degeneration following injury by regulating NAD(+) metabolism (By similarity). Acts as a negative regulator of MYD88- and TRIF-dependent toll-like receptor signaling pathway by promoting Wallerian degeneration, an injury-induced form of programmed subcellular death which involves degeneration of an axon distal to the injury site (PubMed:22366489). Wallerian degeneration is triggered by NAD(+) depletion: in response to injury, SARM1 is activated and catalyzes cleavage of NAD(+) into ADP-D-ribose (ADPR), cyclic ADPR (cADPR) and nicotinamide; NAD(+) cleavage promoting cytoskeletal degradation and axon destruction (By similarity). Also able to hydrolyze NADP(+), but not other NAD(+)-related molecules (By similarity). Can activate neuronal cell death in response to stress (By similarity). Regulates dendritic arborization through the MAPK4-JNK pathway (By similarity). Involved in innate immune response: inhibits both TICAM1/TRIF- and MYD88-dependent activation of JUN/AP-1, TRIF-dependent activation of NF-kappa-B and IRF3, and the phosphorylation of MAPK14/p38 (By similarity).</text>
</comment>
<comment type="catalytic activity">
    <reaction evidence="2">
        <text>NAD(+) + H2O = ADP-D-ribose + nicotinamide + H(+)</text>
        <dbReference type="Rhea" id="RHEA:16301"/>
        <dbReference type="ChEBI" id="CHEBI:15377"/>
        <dbReference type="ChEBI" id="CHEBI:15378"/>
        <dbReference type="ChEBI" id="CHEBI:17154"/>
        <dbReference type="ChEBI" id="CHEBI:57540"/>
        <dbReference type="ChEBI" id="CHEBI:57967"/>
        <dbReference type="EC" id="3.2.2.6"/>
    </reaction>
    <physiologicalReaction direction="left-to-right" evidence="2">
        <dbReference type="Rhea" id="RHEA:16302"/>
    </physiologicalReaction>
</comment>
<comment type="catalytic activity">
    <reaction evidence="2">
        <text>NAD(+) = cyclic ADP-beta-D-ribose + nicotinamide + H(+)</text>
        <dbReference type="Rhea" id="RHEA:38611"/>
        <dbReference type="ChEBI" id="CHEBI:15378"/>
        <dbReference type="ChEBI" id="CHEBI:17154"/>
        <dbReference type="ChEBI" id="CHEBI:57540"/>
        <dbReference type="ChEBI" id="CHEBI:73672"/>
    </reaction>
    <physiologicalReaction direction="left-to-right" evidence="2">
        <dbReference type="Rhea" id="RHEA:38612"/>
    </physiologicalReaction>
</comment>
<comment type="catalytic activity">
    <reaction evidence="2">
        <text>NADP(+) + H2O = ADP-D-ribose 2'-phosphate + nicotinamide + H(+)</text>
        <dbReference type="Rhea" id="RHEA:19849"/>
        <dbReference type="ChEBI" id="CHEBI:15377"/>
        <dbReference type="ChEBI" id="CHEBI:15378"/>
        <dbReference type="ChEBI" id="CHEBI:17154"/>
        <dbReference type="ChEBI" id="CHEBI:58349"/>
        <dbReference type="ChEBI" id="CHEBI:58673"/>
    </reaction>
    <physiologicalReaction direction="left-to-right" evidence="2">
        <dbReference type="Rhea" id="RHEA:19850"/>
    </physiologicalReaction>
</comment>
<comment type="activity regulation">
    <text evidence="2">Autoinhibited: in the inactive state, the enzymatic TIR domain is held apart by the autoinhibiting ARM repeats. NAD(+)-binding to ARM repeats maintains an inactive state by promoting interaction between ARM repeats and the TIR domain, thereby facilitating inhibition of the enzymatic TIR domain. Following activation, possibly by nicotinamide mononucleotide (NMN), auto-inhibitory interactions are released, allowing self-association of the TIR domains and subsequent activation of the NAD(+) hydrolase (NADase) activity. Self-association of TIR domains is facilitated by the octamer of SAM domains.</text>
</comment>
<comment type="subunit">
    <text evidence="1 2">Homooctamer; forms an octameric ring via SAM domains. Interacts with TICAM1/TRIF and thereby interferes with TICAM1/TRIF function (By similarity). Interacts with MAPK10/JNK3 and SDC2 (via cytoplasmic domain) (By similarity).</text>
</comment>
<comment type="subcellular location">
    <subcellularLocation>
        <location evidence="2">Cytoplasm</location>
    </subcellularLocation>
    <subcellularLocation>
        <location evidence="1">Cell projection</location>
        <location evidence="1">Axon</location>
    </subcellularLocation>
    <subcellularLocation>
        <location evidence="1">Cell projection</location>
        <location evidence="1">Dendrite</location>
    </subcellularLocation>
    <subcellularLocation>
        <location evidence="1">Synapse</location>
    </subcellularLocation>
    <subcellularLocation>
        <location evidence="2">Mitochondrion</location>
    </subcellularLocation>
    <text evidence="1">Associated with microtubules.</text>
</comment>
<comment type="tissue specificity">
    <text evidence="7">Highest expression seen in the spleen and the brain, followed by lung, kidney, liver and other tissues.</text>
</comment>
<comment type="domain">
    <text evidence="2">The TIR domain mediates NAD(+) hydrolase (NADase) activity. Self-association of TIR domains is required for NADase activity.</text>
</comment>
<comment type="domain">
    <text evidence="2">The ARM repeats inhibit the NAD(+) hydrolase (NADase) activity by binding to NAD(+): NAD(+)-binding to ARM repeats facilitates inhibition of the TIR domain NADase through their domain interface. In contrast to classical ARM repeats, the last helix of ARM 6 does not fold back to interact with the first two helices, but instead turns towards the N-terminus of SARM1. As a result, the two following motifs ARM 7 and ARM 8 reverse their directions and lie perpendicularly. Moreover, ARM repeats interact with different domains not only within each protomer but also of the adjacent ones.</text>
</comment>
<comment type="PTM">
    <text evidence="2">Phosphorylation at Ser-549 by JNK kinases (MAPK8, MAPK9 and /or MAPK10) enhance the NAD(+) hydrolase (NADase) activity. Phosphorylation at Ser-549 and subsequent activation takes place in response to oxidative stress conditions and inhibits mitochondrial respiration.</text>
</comment>
<comment type="similarity">
    <text evidence="9">Belongs to the SARM1 family.</text>
</comment>
<evidence type="ECO:0000250" key="1">
    <source>
        <dbReference type="UniProtKB" id="Q6PDS3"/>
    </source>
</evidence>
<evidence type="ECO:0000250" key="2">
    <source>
        <dbReference type="UniProtKB" id="Q6SZW1"/>
    </source>
</evidence>
<evidence type="ECO:0000255" key="3"/>
<evidence type="ECO:0000255" key="4">
    <source>
        <dbReference type="PROSITE-ProRule" id="PRU00184"/>
    </source>
</evidence>
<evidence type="ECO:0000255" key="5">
    <source>
        <dbReference type="PROSITE-ProRule" id="PRU00204"/>
    </source>
</evidence>
<evidence type="ECO:0000256" key="6">
    <source>
        <dbReference type="SAM" id="MobiDB-lite"/>
    </source>
</evidence>
<evidence type="ECO:0000269" key="7">
    <source>
    </source>
</evidence>
<evidence type="ECO:0000303" key="8">
    <source>
    </source>
</evidence>
<evidence type="ECO:0000305" key="9"/>
<accession>I3L5V6</accession>
<sequence>MVLTILFSAYKLCRFFAMSSPRPGAERLAVPGPDGGGGAGPWWTAGGRGPREVSPGVGAEVQGALERALPELQQALSALKQAGGGRAVGAGLAEVFQLVEEAWLLPAMGREVAQGLCDAIRLEGGLDLLLRLLQAPELETRVQAARLLEQILVAENRRDRVARIGLGVILNLAKEREPVELARSVAGILEHMFKHSEETCQRLVAAGGLDAVLYWCRRTDPALLRHCALALANCAMHGGQAAQRRMVEKRAAEWLFPLAFSKEDELLRLHACLAVAVLATNKEVEREVERSGTLALVEPLVASLDPGRFARCLVDASDTSQGRGPDDLQRLVPLLDSSRMEAQCIGAFYLCAEAVIMHIKNRNKVFSDIGAIQSLKRLVSYSTNGTTSALAKRALRLLGEEVPRPILPCVASWKEAEVQTWLQQIGFSQYCESFREQQVDGDLLLRLTEEELQTDLGMKSGITRKRFFRELTELKTFANYATCDRSNLADWLGSLDPRFRQYTYGLVSCGLDRSLLHRVSEQQLLEDCGIRLGVHRVRILTAAREMLHSPLPCTGSKPSGDVPDVFISYRRNSGSQLASLLKVHLQLHGFSVFIDVEKLEAGKFEDKLIQSIMSARNFVLVLSAGALDKCMQDHDCKDWVHKEIVTALSCGKNIVPVIDGFEWPEPHTLPEDMQAVLTFNGIKWSHEYQEATIEKIIRFLQGRSSRDSSAGSDTSLEGAAPMGPT</sequence>
<proteinExistence type="evidence at transcript level"/>
<protein>
    <recommendedName>
        <fullName evidence="9">NAD(+) hydrolase SARM1</fullName>
        <shortName evidence="9">NADase SARM1</shortName>
        <ecNumber evidence="2">3.2.2.6</ecNumber>
    </recommendedName>
    <alternativeName>
        <fullName evidence="9">NADP(+) hydrolase SARM1</fullName>
        <ecNumber evidence="2">3.2.2.-</ecNumber>
    </alternativeName>
    <alternativeName>
        <fullName evidence="8">Sterile alpha and TIR motif-containing protein 1</fullName>
    </alternativeName>
</protein>
<gene>
    <name evidence="8" type="primary">SARM1</name>
</gene>